<comment type="function">
    <text evidence="1">Condenses 4-methyl-5-(beta-hydroxyethyl)thiazole monophosphate (THZ-P) and 2-methyl-4-amino-5-hydroxymethyl pyrimidine pyrophosphate (HMP-PP) to form thiamine monophosphate (TMP).</text>
</comment>
<comment type="catalytic activity">
    <reaction evidence="1">
        <text>2-[(2R,5Z)-2-carboxy-4-methylthiazol-5(2H)-ylidene]ethyl phosphate + 4-amino-2-methyl-5-(diphosphooxymethyl)pyrimidine + 2 H(+) = thiamine phosphate + CO2 + diphosphate</text>
        <dbReference type="Rhea" id="RHEA:47844"/>
        <dbReference type="ChEBI" id="CHEBI:15378"/>
        <dbReference type="ChEBI" id="CHEBI:16526"/>
        <dbReference type="ChEBI" id="CHEBI:33019"/>
        <dbReference type="ChEBI" id="CHEBI:37575"/>
        <dbReference type="ChEBI" id="CHEBI:57841"/>
        <dbReference type="ChEBI" id="CHEBI:62899"/>
        <dbReference type="EC" id="2.5.1.3"/>
    </reaction>
</comment>
<comment type="catalytic activity">
    <reaction evidence="1">
        <text>2-(2-carboxy-4-methylthiazol-5-yl)ethyl phosphate + 4-amino-2-methyl-5-(diphosphooxymethyl)pyrimidine + 2 H(+) = thiamine phosphate + CO2 + diphosphate</text>
        <dbReference type="Rhea" id="RHEA:47848"/>
        <dbReference type="ChEBI" id="CHEBI:15378"/>
        <dbReference type="ChEBI" id="CHEBI:16526"/>
        <dbReference type="ChEBI" id="CHEBI:33019"/>
        <dbReference type="ChEBI" id="CHEBI:37575"/>
        <dbReference type="ChEBI" id="CHEBI:57841"/>
        <dbReference type="ChEBI" id="CHEBI:62890"/>
        <dbReference type="EC" id="2.5.1.3"/>
    </reaction>
</comment>
<comment type="catalytic activity">
    <reaction evidence="1">
        <text>4-methyl-5-(2-phosphooxyethyl)-thiazole + 4-amino-2-methyl-5-(diphosphooxymethyl)pyrimidine + H(+) = thiamine phosphate + diphosphate</text>
        <dbReference type="Rhea" id="RHEA:22328"/>
        <dbReference type="ChEBI" id="CHEBI:15378"/>
        <dbReference type="ChEBI" id="CHEBI:33019"/>
        <dbReference type="ChEBI" id="CHEBI:37575"/>
        <dbReference type="ChEBI" id="CHEBI:57841"/>
        <dbReference type="ChEBI" id="CHEBI:58296"/>
        <dbReference type="EC" id="2.5.1.3"/>
    </reaction>
</comment>
<comment type="cofactor">
    <cofactor evidence="1">
        <name>Mg(2+)</name>
        <dbReference type="ChEBI" id="CHEBI:18420"/>
    </cofactor>
    <text evidence="1">Binds 1 Mg(2+) ion per subunit.</text>
</comment>
<comment type="pathway">
    <text evidence="1">Cofactor biosynthesis; thiamine diphosphate biosynthesis; thiamine phosphate from 4-amino-2-methyl-5-diphosphomethylpyrimidine and 4-methyl-5-(2-phosphoethyl)-thiazole: step 1/1.</text>
</comment>
<comment type="similarity">
    <text evidence="1">Belongs to the thiamine-phosphate synthase family.</text>
</comment>
<comment type="sequence caution" evidence="2">
    <conflict type="erroneous initiation">
        <sequence resource="EMBL-CDS" id="AAP07460"/>
    </conflict>
</comment>
<evidence type="ECO:0000255" key="1">
    <source>
        <dbReference type="HAMAP-Rule" id="MF_00097"/>
    </source>
</evidence>
<evidence type="ECO:0000305" key="2"/>
<proteinExistence type="inferred from homology"/>
<gene>
    <name evidence="1" type="primary">thiE</name>
    <name type="ordered locus">BC_0420</name>
</gene>
<sequence>MARIEIDKMSKLLQVYFIMGSNNCTRDPLAVLKEALDGGVTIFQFREKGEGSLIGEDRVRFAKELQTLCNEYSVPFIVNDDVELAIELDADGVHVGQDDEGITSVREKMGDKIIGVSAHTIEEARFAIENGADYLGVGPIFPTSTKKDTKAVQGTKGLAYFREQGITVPIVGIGGITIENTAAVIEAGADGVSVISAISLAESAYESTRKLAEEVKRSL</sequence>
<feature type="chain" id="PRO_0000156993" description="Thiamine-phosphate synthase">
    <location>
        <begin position="1"/>
        <end position="219"/>
    </location>
</feature>
<feature type="binding site" evidence="1">
    <location>
        <begin position="44"/>
        <end position="48"/>
    </location>
    <ligand>
        <name>4-amino-2-methyl-5-(diphosphooxymethyl)pyrimidine</name>
        <dbReference type="ChEBI" id="CHEBI:57841"/>
    </ligand>
</feature>
<feature type="binding site" evidence="1">
    <location>
        <position position="79"/>
    </location>
    <ligand>
        <name>4-amino-2-methyl-5-(diphosphooxymethyl)pyrimidine</name>
        <dbReference type="ChEBI" id="CHEBI:57841"/>
    </ligand>
</feature>
<feature type="binding site" evidence="1">
    <location>
        <position position="80"/>
    </location>
    <ligand>
        <name>Mg(2+)</name>
        <dbReference type="ChEBI" id="CHEBI:18420"/>
    </ligand>
</feature>
<feature type="binding site" evidence="1">
    <location>
        <position position="99"/>
    </location>
    <ligand>
        <name>Mg(2+)</name>
        <dbReference type="ChEBI" id="CHEBI:18420"/>
    </ligand>
</feature>
<feature type="binding site" evidence="1">
    <location>
        <position position="117"/>
    </location>
    <ligand>
        <name>4-amino-2-methyl-5-(diphosphooxymethyl)pyrimidine</name>
        <dbReference type="ChEBI" id="CHEBI:57841"/>
    </ligand>
</feature>
<feature type="binding site" evidence="1">
    <location>
        <begin position="143"/>
        <end position="145"/>
    </location>
    <ligand>
        <name>2-[(2R,5Z)-2-carboxy-4-methylthiazol-5(2H)-ylidene]ethyl phosphate</name>
        <dbReference type="ChEBI" id="CHEBI:62899"/>
    </ligand>
</feature>
<feature type="binding site" evidence="1">
    <location>
        <position position="146"/>
    </location>
    <ligand>
        <name>4-amino-2-methyl-5-(diphosphooxymethyl)pyrimidine</name>
        <dbReference type="ChEBI" id="CHEBI:57841"/>
    </ligand>
</feature>
<feature type="binding site" evidence="1">
    <location>
        <position position="175"/>
    </location>
    <ligand>
        <name>2-[(2R,5Z)-2-carboxy-4-methylthiazol-5(2H)-ylidene]ethyl phosphate</name>
        <dbReference type="ChEBI" id="CHEBI:62899"/>
    </ligand>
</feature>
<feature type="binding site" evidence="1">
    <location>
        <begin position="195"/>
        <end position="196"/>
    </location>
    <ligand>
        <name>2-[(2R,5Z)-2-carboxy-4-methylthiazol-5(2H)-ylidene]ethyl phosphate</name>
        <dbReference type="ChEBI" id="CHEBI:62899"/>
    </ligand>
</feature>
<keyword id="KW-0460">Magnesium</keyword>
<keyword id="KW-0479">Metal-binding</keyword>
<keyword id="KW-1185">Reference proteome</keyword>
<keyword id="KW-0784">Thiamine biosynthesis</keyword>
<keyword id="KW-0808">Transferase</keyword>
<name>THIE_BACCR</name>
<organism>
    <name type="scientific">Bacillus cereus (strain ATCC 14579 / DSM 31 / CCUG 7414 / JCM 2152 / NBRC 15305 / NCIMB 9373 / NCTC 2599 / NRRL B-3711)</name>
    <dbReference type="NCBI Taxonomy" id="226900"/>
    <lineage>
        <taxon>Bacteria</taxon>
        <taxon>Bacillati</taxon>
        <taxon>Bacillota</taxon>
        <taxon>Bacilli</taxon>
        <taxon>Bacillales</taxon>
        <taxon>Bacillaceae</taxon>
        <taxon>Bacillus</taxon>
        <taxon>Bacillus cereus group</taxon>
    </lineage>
</organism>
<accession>Q81IG8</accession>
<reference key="1">
    <citation type="journal article" date="2003" name="Nature">
        <title>Genome sequence of Bacillus cereus and comparative analysis with Bacillus anthracis.</title>
        <authorList>
            <person name="Ivanova N."/>
            <person name="Sorokin A."/>
            <person name="Anderson I."/>
            <person name="Galleron N."/>
            <person name="Candelon B."/>
            <person name="Kapatral V."/>
            <person name="Bhattacharyya A."/>
            <person name="Reznik G."/>
            <person name="Mikhailova N."/>
            <person name="Lapidus A."/>
            <person name="Chu L."/>
            <person name="Mazur M."/>
            <person name="Goltsman E."/>
            <person name="Larsen N."/>
            <person name="D'Souza M."/>
            <person name="Walunas T."/>
            <person name="Grechkin Y."/>
            <person name="Pusch G."/>
            <person name="Haselkorn R."/>
            <person name="Fonstein M."/>
            <person name="Ehrlich S.D."/>
            <person name="Overbeek R."/>
            <person name="Kyrpides N.C."/>
        </authorList>
    </citation>
    <scope>NUCLEOTIDE SEQUENCE [LARGE SCALE GENOMIC DNA]</scope>
    <source>
        <strain>ATCC 14579 / DSM 31 / CCUG 7414 / JCM 2152 / NBRC 15305 / NCIMB 9373 / NCTC 2599 / NRRL B-3711</strain>
    </source>
</reference>
<dbReference type="EC" id="2.5.1.3" evidence="1"/>
<dbReference type="EMBL" id="AE016877">
    <property type="protein sequence ID" value="AAP07460.1"/>
    <property type="status" value="ALT_INIT"/>
    <property type="molecule type" value="Genomic_DNA"/>
</dbReference>
<dbReference type="RefSeq" id="NP_830259.1">
    <property type="nucleotide sequence ID" value="NC_004722.1"/>
</dbReference>
<dbReference type="RefSeq" id="WP_000090962.1">
    <property type="nucleotide sequence ID" value="NZ_CP138336.1"/>
</dbReference>
<dbReference type="SMR" id="Q81IG8"/>
<dbReference type="STRING" id="226900.BC_0420"/>
<dbReference type="KEGG" id="bce:BC0420"/>
<dbReference type="PATRIC" id="fig|226900.8.peg.389"/>
<dbReference type="HOGENOM" id="CLU_018272_3_2_9"/>
<dbReference type="OrthoDB" id="9812206at2"/>
<dbReference type="UniPathway" id="UPA00060">
    <property type="reaction ID" value="UER00141"/>
</dbReference>
<dbReference type="Proteomes" id="UP000001417">
    <property type="component" value="Chromosome"/>
</dbReference>
<dbReference type="GO" id="GO:0005737">
    <property type="term" value="C:cytoplasm"/>
    <property type="evidence" value="ECO:0000318"/>
    <property type="project" value="GO_Central"/>
</dbReference>
<dbReference type="GO" id="GO:0000287">
    <property type="term" value="F:magnesium ion binding"/>
    <property type="evidence" value="ECO:0007669"/>
    <property type="project" value="UniProtKB-UniRule"/>
</dbReference>
<dbReference type="GO" id="GO:0004789">
    <property type="term" value="F:thiamine-phosphate diphosphorylase activity"/>
    <property type="evidence" value="ECO:0000318"/>
    <property type="project" value="GO_Central"/>
</dbReference>
<dbReference type="GO" id="GO:0009228">
    <property type="term" value="P:thiamine biosynthetic process"/>
    <property type="evidence" value="ECO:0000318"/>
    <property type="project" value="GO_Central"/>
</dbReference>
<dbReference type="GO" id="GO:0009229">
    <property type="term" value="P:thiamine diphosphate biosynthetic process"/>
    <property type="evidence" value="ECO:0007669"/>
    <property type="project" value="UniProtKB-UniRule"/>
</dbReference>
<dbReference type="CDD" id="cd00564">
    <property type="entry name" value="TMP_TenI"/>
    <property type="match status" value="1"/>
</dbReference>
<dbReference type="FunFam" id="3.20.20.70:FF:000096">
    <property type="entry name" value="Thiamine-phosphate synthase"/>
    <property type="match status" value="1"/>
</dbReference>
<dbReference type="Gene3D" id="3.20.20.70">
    <property type="entry name" value="Aldolase class I"/>
    <property type="match status" value="1"/>
</dbReference>
<dbReference type="HAMAP" id="MF_00097">
    <property type="entry name" value="TMP_synthase"/>
    <property type="match status" value="1"/>
</dbReference>
<dbReference type="InterPro" id="IPR013785">
    <property type="entry name" value="Aldolase_TIM"/>
</dbReference>
<dbReference type="InterPro" id="IPR036206">
    <property type="entry name" value="ThiamineP_synth_sf"/>
</dbReference>
<dbReference type="InterPro" id="IPR022998">
    <property type="entry name" value="ThiamineP_synth_TenI"/>
</dbReference>
<dbReference type="InterPro" id="IPR034291">
    <property type="entry name" value="TMP_synthase"/>
</dbReference>
<dbReference type="NCBIfam" id="TIGR00693">
    <property type="entry name" value="thiE"/>
    <property type="match status" value="1"/>
</dbReference>
<dbReference type="PANTHER" id="PTHR20857">
    <property type="entry name" value="THIAMINE-PHOSPHATE PYROPHOSPHORYLASE"/>
    <property type="match status" value="1"/>
</dbReference>
<dbReference type="PANTHER" id="PTHR20857:SF15">
    <property type="entry name" value="THIAMINE-PHOSPHATE SYNTHASE"/>
    <property type="match status" value="1"/>
</dbReference>
<dbReference type="Pfam" id="PF02581">
    <property type="entry name" value="TMP-TENI"/>
    <property type="match status" value="1"/>
</dbReference>
<dbReference type="SUPFAM" id="SSF51391">
    <property type="entry name" value="Thiamin phosphate synthase"/>
    <property type="match status" value="1"/>
</dbReference>
<protein>
    <recommendedName>
        <fullName evidence="1">Thiamine-phosphate synthase</fullName>
        <shortName evidence="1">TP synthase</shortName>
        <shortName evidence="1">TPS</shortName>
        <ecNumber evidence="1">2.5.1.3</ecNumber>
    </recommendedName>
    <alternativeName>
        <fullName evidence="1">Thiamine-phosphate pyrophosphorylase</fullName>
        <shortName evidence="1">TMP pyrophosphorylase</shortName>
        <shortName evidence="1">TMP-PPase</shortName>
    </alternativeName>
</protein>